<keyword id="KW-0238">DNA-binding</keyword>
<keyword id="KW-0479">Metal-binding</keyword>
<keyword id="KW-0539">Nucleus</keyword>
<keyword id="KW-1185">Reference proteome</keyword>
<keyword id="KW-0677">Repeat</keyword>
<keyword id="KW-0804">Transcription</keyword>
<keyword id="KW-0805">Transcription regulation</keyword>
<keyword id="KW-0862">Zinc</keyword>
<keyword id="KW-0863">Zinc-finger</keyword>
<dbReference type="EMBL" id="S57882">
    <property type="protein sequence ID" value="AAB26030.1"/>
    <property type="molecule type" value="Genomic_DNA"/>
</dbReference>
<dbReference type="EMBL" id="M25873">
    <property type="protein sequence ID" value="AAA50020.1"/>
    <property type="molecule type" value="mRNA"/>
</dbReference>
<dbReference type="PIR" id="H33282">
    <property type="entry name" value="H33282"/>
</dbReference>
<dbReference type="PIR" id="S06582">
    <property type="entry name" value="S06582"/>
</dbReference>
<dbReference type="SMR" id="P18733"/>
<dbReference type="Xenbase" id="XB-GENE-5921200">
    <property type="gene designation" value="xlcgf66.L"/>
</dbReference>
<dbReference type="Proteomes" id="UP000186698">
    <property type="component" value="Unplaced"/>
</dbReference>
<dbReference type="GO" id="GO:0005634">
    <property type="term" value="C:nucleus"/>
    <property type="evidence" value="ECO:0000318"/>
    <property type="project" value="GO_Central"/>
</dbReference>
<dbReference type="GO" id="GO:0000981">
    <property type="term" value="F:DNA-binding transcription factor activity, RNA polymerase II-specific"/>
    <property type="evidence" value="ECO:0000318"/>
    <property type="project" value="GO_Central"/>
</dbReference>
<dbReference type="GO" id="GO:0000978">
    <property type="term" value="F:RNA polymerase II cis-regulatory region sequence-specific DNA binding"/>
    <property type="evidence" value="ECO:0000318"/>
    <property type="project" value="GO_Central"/>
</dbReference>
<dbReference type="GO" id="GO:0008270">
    <property type="term" value="F:zinc ion binding"/>
    <property type="evidence" value="ECO:0007669"/>
    <property type="project" value="UniProtKB-KW"/>
</dbReference>
<dbReference type="GO" id="GO:0006357">
    <property type="term" value="P:regulation of transcription by RNA polymerase II"/>
    <property type="evidence" value="ECO:0000318"/>
    <property type="project" value="GO_Central"/>
</dbReference>
<dbReference type="FunFam" id="3.30.160.60:FF:003089">
    <property type="match status" value="1"/>
</dbReference>
<dbReference type="FunFam" id="3.30.160.60:FF:001155">
    <property type="entry name" value="Zinc finger 30C"/>
    <property type="match status" value="1"/>
</dbReference>
<dbReference type="FunFam" id="3.30.160.60:FF:001007">
    <property type="entry name" value="Zinc finger protein 1184"/>
    <property type="match status" value="1"/>
</dbReference>
<dbReference type="FunFam" id="3.30.160.60:FF:000478">
    <property type="entry name" value="Zinc finger protein 133"/>
    <property type="match status" value="1"/>
</dbReference>
<dbReference type="FunFam" id="3.30.160.60:FF:002343">
    <property type="entry name" value="Zinc finger protein 33A"/>
    <property type="match status" value="1"/>
</dbReference>
<dbReference type="FunFam" id="3.30.160.60:FF:002592">
    <property type="entry name" value="Zinc finger protein 527"/>
    <property type="match status" value="1"/>
</dbReference>
<dbReference type="FunFam" id="3.30.160.60:FF:000286">
    <property type="entry name" value="Zinc finger protein 770"/>
    <property type="match status" value="1"/>
</dbReference>
<dbReference type="Gene3D" id="3.30.160.60">
    <property type="entry name" value="Classic Zinc Finger"/>
    <property type="match status" value="12"/>
</dbReference>
<dbReference type="InterPro" id="IPR036236">
    <property type="entry name" value="Znf_C2H2_sf"/>
</dbReference>
<dbReference type="InterPro" id="IPR013087">
    <property type="entry name" value="Znf_C2H2_type"/>
</dbReference>
<dbReference type="PANTHER" id="PTHR23226:SF397">
    <property type="entry name" value="C2H2-TYPE DOMAIN-CONTAINING PROTEIN"/>
    <property type="match status" value="1"/>
</dbReference>
<dbReference type="PANTHER" id="PTHR23226">
    <property type="entry name" value="ZINC FINGER AND SCAN DOMAIN-CONTAINING"/>
    <property type="match status" value="1"/>
</dbReference>
<dbReference type="Pfam" id="PF00096">
    <property type="entry name" value="zf-C2H2"/>
    <property type="match status" value="11"/>
</dbReference>
<dbReference type="SMART" id="SM00355">
    <property type="entry name" value="ZnF_C2H2"/>
    <property type="match status" value="11"/>
</dbReference>
<dbReference type="SUPFAM" id="SSF57667">
    <property type="entry name" value="beta-beta-alpha zinc fingers"/>
    <property type="match status" value="6"/>
</dbReference>
<dbReference type="PROSITE" id="PS00028">
    <property type="entry name" value="ZINC_FINGER_C2H2_1"/>
    <property type="match status" value="11"/>
</dbReference>
<dbReference type="PROSITE" id="PS50157">
    <property type="entry name" value="ZINC_FINGER_C2H2_2"/>
    <property type="match status" value="12"/>
</dbReference>
<proteinExistence type="evidence at transcript level"/>
<name>ZG66_XENLA</name>
<protein>
    <recommendedName>
        <fullName>Gastrula zinc finger protein XlCGF66.1</fullName>
    </recommendedName>
</protein>
<evidence type="ECO:0000255" key="1">
    <source>
        <dbReference type="PROSITE-ProRule" id="PRU00042"/>
    </source>
</evidence>
<evidence type="ECO:0000256" key="2">
    <source>
        <dbReference type="SAM" id="MobiDB-lite"/>
    </source>
</evidence>
<evidence type="ECO:0000305" key="3"/>
<comment type="function">
    <text>May be involved in transcriptional regulation.</text>
</comment>
<comment type="subcellular location">
    <subcellularLocation>
        <location evidence="3">Nucleus</location>
    </subcellularLocation>
</comment>
<comment type="similarity">
    <text evidence="3">Belongs to the krueppel C2H2-type zinc-finger protein family.</text>
</comment>
<reference key="1">
    <citation type="journal article" date="1993" name="J. Mol. Biol.">
        <title>Evidence for a clustered genomic organization of FAX-zinc finger protein encoding transcription units in Xenopus laevis.</title>
        <authorList>
            <person name="Nietfeld W."/>
            <person name="Conrad S."/>
            <person name="van Wijk I."/>
            <person name="Giltay R."/>
            <person name="Bouwmeester T."/>
            <person name="Knochel W."/>
            <person name="Pieler T."/>
        </authorList>
    </citation>
    <scope>NUCLEOTIDE SEQUENCE [GENOMIC DNA] OF 1-132</scope>
</reference>
<reference key="2">
    <citation type="journal article" date="1989" name="Proc. Natl. Acad. Sci. U.S.A.">
        <title>Evolutionary conserved modules associated with zinc fingers in Xenopus laevis.</title>
        <authorList>
            <person name="Knoechel W."/>
            <person name="Poeting A."/>
            <person name="Koester M."/>
            <person name="el Baradi T."/>
            <person name="Nietfeld W."/>
            <person name="Bouwmeester T."/>
            <person name="Pieler T."/>
        </authorList>
    </citation>
    <scope>NUCLEOTIDE SEQUENCE [MRNA] OF 1-295</scope>
</reference>
<reference key="3">
    <citation type="journal article" date="1989" name="J. Mol. Biol.">
        <title>Second-order repeats in Xenopus laevis finger proteins.</title>
        <authorList>
            <person name="Nietfeld W."/>
            <person name="El-Baradi T."/>
            <person name="Mentzel H."/>
            <person name="Pieler T."/>
            <person name="Koester M."/>
            <person name="Poeting A."/>
            <person name="Knoechel W."/>
        </authorList>
    </citation>
    <scope>NUCLEOTIDE SEQUENCE OF 240-606</scope>
</reference>
<organism>
    <name type="scientific">Xenopus laevis</name>
    <name type="common">African clawed frog</name>
    <dbReference type="NCBI Taxonomy" id="8355"/>
    <lineage>
        <taxon>Eukaryota</taxon>
        <taxon>Metazoa</taxon>
        <taxon>Chordata</taxon>
        <taxon>Craniata</taxon>
        <taxon>Vertebrata</taxon>
        <taxon>Euteleostomi</taxon>
        <taxon>Amphibia</taxon>
        <taxon>Batrachia</taxon>
        <taxon>Anura</taxon>
        <taxon>Pipoidea</taxon>
        <taxon>Pipidae</taxon>
        <taxon>Xenopodinae</taxon>
        <taxon>Xenopus</taxon>
        <taxon>Xenopus</taxon>
    </lineage>
</organism>
<sequence>MGMWEEASDTGMKGKKKKKDKNEEEEERGKKERMVNLTLEMIYLLTGEHYIPRKKSDDGGALHAPGSVIQKENNKNDKKILELMSNIIQLLTGEVAIRTHHVSIYFSLDEWDYIKGNKDLYEDGMKEEPQQLHPLAVCEYKDESNVTAHMESTLGCNNDGNLTKMSPVEQPPPANGIKEEVASCEEINQSDCSINPFTEQIQGTDTPTPIMGCSHFKTKVNKYDINSYWSPDESGITKSTLHSKDSCNEGHKHLSHKSDYNKHQNPHKRQKSFSCSKCGKCFSNLTSLHCHQKTHKGKKLLCLKCGKCFATSSKLIIHRQTHMDKKHFSCSECRICFSKQSSLARHQITHTEEKPLASSECGKCFASLSELTVHQRTNTGEKHDFCSECGKCFATSSQLIAHQQQVHIEVKPFSCTKCGKCFSYRSRLVRHQRTHTGVKPYSCSECGKCFASSSHLIGHRQQVHMEGKTFFCSECGKYFLYQSQLVRHQRTHTGEKPYSCSECGKCFATSSQLMAHQQQVHIEVKPFSCSECGKYFLYRAHLVRHQRTHTGEKPDFCFECGKCFATSLQLIAHQQQVHMEVKQFSCSECGKSFLYRSHLARHHRTH</sequence>
<feature type="chain" id="PRO_0000047805" description="Gastrula zinc finger protein XlCGF66.1">
    <location>
        <begin position="1"/>
        <end position="606" status="greater than"/>
    </location>
</feature>
<feature type="zinc finger region" description="C2H2-type 1" evidence="1">
    <location>
        <begin position="273"/>
        <end position="295"/>
    </location>
</feature>
<feature type="zinc finger region" description="C2H2-type 2" evidence="1">
    <location>
        <begin position="300"/>
        <end position="322"/>
    </location>
</feature>
<feature type="zinc finger region" description="C2H2-type 3" evidence="1">
    <location>
        <begin position="328"/>
        <end position="350"/>
    </location>
</feature>
<feature type="zinc finger region" description="C2H2-type 4" evidence="1">
    <location>
        <begin position="384"/>
        <end position="407"/>
    </location>
</feature>
<feature type="zinc finger region" description="C2H2-type 5" evidence="1">
    <location>
        <begin position="413"/>
        <end position="435"/>
    </location>
</feature>
<feature type="zinc finger region" description="C2H2-type 6" evidence="1">
    <location>
        <begin position="441"/>
        <end position="464"/>
    </location>
</feature>
<feature type="zinc finger region" description="C2H2-type 7" evidence="1">
    <location>
        <begin position="470"/>
        <end position="492"/>
    </location>
</feature>
<feature type="zinc finger region" description="C2H2-type 8" evidence="1">
    <location>
        <begin position="498"/>
        <end position="521"/>
    </location>
</feature>
<feature type="zinc finger region" description="C2H2-type 9" evidence="1">
    <location>
        <begin position="527"/>
        <end position="549"/>
    </location>
</feature>
<feature type="zinc finger region" description="C2H2-type 10" evidence="1">
    <location>
        <begin position="555"/>
        <end position="578"/>
    </location>
</feature>
<feature type="zinc finger region" description="C2H2-type 11" evidence="1">
    <location>
        <begin position="584"/>
        <end position="606"/>
    </location>
</feature>
<feature type="region of interest" description="Disordered" evidence="2">
    <location>
        <begin position="1"/>
        <end position="31"/>
    </location>
</feature>
<feature type="region of interest" description="Disordered" evidence="2">
    <location>
        <begin position="240"/>
        <end position="271"/>
    </location>
</feature>
<feature type="compositionally biased region" description="Basic and acidic residues" evidence="2">
    <location>
        <begin position="242"/>
        <end position="262"/>
    </location>
</feature>
<feature type="non-terminal residue">
    <location>
        <position position="606"/>
    </location>
</feature>
<accession>P18733</accession>
<accession>Q6LDC3</accession>